<sequence length="532" mass="57764">MPLLHPQSLRHPSFEIQTQRRSNSTTRLLLSHKFLHSQASIISISRTRILKRVSQNLSVAKAASAQASSSVGESVAQTSEKDVLKALSQIIDPDFGTDIVSCGFVKDLGINEALGEVSFRLELTTPACPVKDMFENKANEVVAALPWVKKVNVTMSAQPAKPIFAGQLPFGLSRISNIIAVSSCKGGVGKSTVAVNLAYTLAGMGARVGIFDADVYGPSLPTMVNPESRILEMNPEKKTIIPTEYMGVKLVSFGFAGQGRAIMRGPMVSGVINQLLTTTEWGELDYLVIDMPPGTGDIQLTLCQVAPLTAAVIVTTPQKLAFIDVAKGVRMFSKLKVPCVAVVENMCHFDADGKRYYPFGKGSGSEVVKQFGIPHLFDLPIRPTLSASGDSGTPEVVSDPLSDVARTFQDLGVCVVQQCAKIRQQVSTAVTYDKYLKAIRVKVPNSDEEFLLHPATVRRNDRSAQSVDEWTGEQKVLYGDVAEDIEPEDIRPMGNYAVSITWPDGFSQIAPYDQLEEIERLVDVPPLSPVEV</sequence>
<dbReference type="EMBL" id="AJ540304">
    <property type="protein sequence ID" value="CAD90253.1"/>
    <property type="molecule type" value="mRNA"/>
</dbReference>
<dbReference type="EMBL" id="AY450358">
    <property type="protein sequence ID" value="AAR97892.1"/>
    <property type="molecule type" value="mRNA"/>
</dbReference>
<dbReference type="EMBL" id="AP000382">
    <property type="protein sequence ID" value="BAB02944.1"/>
    <property type="status" value="ALT_SEQ"/>
    <property type="molecule type" value="Genomic_DNA"/>
</dbReference>
<dbReference type="EMBL" id="CP002686">
    <property type="protein sequence ID" value="AEE76897.1"/>
    <property type="molecule type" value="Genomic_DNA"/>
</dbReference>
<dbReference type="EMBL" id="AK226386">
    <property type="protein sequence ID" value="BAE98532.1"/>
    <property type="molecule type" value="mRNA"/>
</dbReference>
<dbReference type="EMBL" id="AY086264">
    <property type="protein sequence ID" value="AAM64337.1"/>
    <property type="molecule type" value="mRNA"/>
</dbReference>
<dbReference type="RefSeq" id="NP_189086.1">
    <property type="nucleotide sequence ID" value="NM_113350.3"/>
</dbReference>
<dbReference type="SMR" id="Q6STH5"/>
<dbReference type="BioGRID" id="7365">
    <property type="interactions" value="3"/>
</dbReference>
<dbReference type="FunCoup" id="Q6STH5">
    <property type="interactions" value="1122"/>
</dbReference>
<dbReference type="IntAct" id="Q6STH5">
    <property type="interactions" value="3"/>
</dbReference>
<dbReference type="STRING" id="3702.Q6STH5"/>
<dbReference type="iPTMnet" id="Q6STH5"/>
<dbReference type="PaxDb" id="3702-AT3G24430.1"/>
<dbReference type="ProteomicsDB" id="230329"/>
<dbReference type="EnsemblPlants" id="AT3G24430.1">
    <property type="protein sequence ID" value="AT3G24430.1"/>
    <property type="gene ID" value="AT3G24430"/>
</dbReference>
<dbReference type="GeneID" id="822033"/>
<dbReference type="Gramene" id="AT3G24430.1">
    <property type="protein sequence ID" value="AT3G24430.1"/>
    <property type="gene ID" value="AT3G24430"/>
</dbReference>
<dbReference type="KEGG" id="ath:AT3G24430"/>
<dbReference type="Araport" id="AT3G24430"/>
<dbReference type="TAIR" id="AT3G24430">
    <property type="gene designation" value="HCF101"/>
</dbReference>
<dbReference type="eggNOG" id="KOG3022">
    <property type="taxonomic scope" value="Eukaryota"/>
</dbReference>
<dbReference type="HOGENOM" id="CLU_024839_1_2_1"/>
<dbReference type="InParanoid" id="Q6STH5"/>
<dbReference type="OMA" id="DEWSGEQ"/>
<dbReference type="OrthoDB" id="1741334at2759"/>
<dbReference type="PhylomeDB" id="Q6STH5"/>
<dbReference type="PRO" id="PR:Q6STH5"/>
<dbReference type="Proteomes" id="UP000006548">
    <property type="component" value="Chromosome 3"/>
</dbReference>
<dbReference type="ExpressionAtlas" id="Q6STH5">
    <property type="expression patterns" value="baseline and differential"/>
</dbReference>
<dbReference type="GO" id="GO:0009507">
    <property type="term" value="C:chloroplast"/>
    <property type="evidence" value="ECO:0000314"/>
    <property type="project" value="TAIR"/>
</dbReference>
<dbReference type="GO" id="GO:0009570">
    <property type="term" value="C:chloroplast stroma"/>
    <property type="evidence" value="ECO:0007005"/>
    <property type="project" value="TAIR"/>
</dbReference>
<dbReference type="GO" id="GO:0005829">
    <property type="term" value="C:cytosol"/>
    <property type="evidence" value="ECO:0007005"/>
    <property type="project" value="TAIR"/>
</dbReference>
<dbReference type="GO" id="GO:0005524">
    <property type="term" value="F:ATP binding"/>
    <property type="evidence" value="ECO:0007669"/>
    <property type="project" value="UniProtKB-KW"/>
</dbReference>
<dbReference type="GO" id="GO:0140663">
    <property type="term" value="F:ATP-dependent FeS chaperone activity"/>
    <property type="evidence" value="ECO:0007669"/>
    <property type="project" value="InterPro"/>
</dbReference>
<dbReference type="GO" id="GO:0051536">
    <property type="term" value="F:iron-sulfur cluster binding"/>
    <property type="evidence" value="ECO:0000314"/>
    <property type="project" value="UniProtKB"/>
</dbReference>
<dbReference type="GO" id="GO:0046872">
    <property type="term" value="F:metal ion binding"/>
    <property type="evidence" value="ECO:0007669"/>
    <property type="project" value="UniProtKB-KW"/>
</dbReference>
<dbReference type="GO" id="GO:0016226">
    <property type="term" value="P:iron-sulfur cluster assembly"/>
    <property type="evidence" value="ECO:0000314"/>
    <property type="project" value="TAIR"/>
</dbReference>
<dbReference type="CDD" id="cd02037">
    <property type="entry name" value="Mrp_NBP35"/>
    <property type="match status" value="1"/>
</dbReference>
<dbReference type="FunFam" id="3.30.300.130:FF:000008">
    <property type="entry name" value="Fe-S cluster assembly factor HCF101, chloroplastic"/>
    <property type="match status" value="1"/>
</dbReference>
<dbReference type="FunFam" id="3.30.2020.30:FF:000001">
    <property type="entry name" value="fe-S cluster assembly factor HCF101, chloroplastic"/>
    <property type="match status" value="1"/>
</dbReference>
<dbReference type="FunFam" id="3.40.50.300:FF:000704">
    <property type="entry name" value="fe-S cluster assembly factor HCF101, chloroplastic"/>
    <property type="match status" value="1"/>
</dbReference>
<dbReference type="Gene3D" id="3.30.2020.30">
    <property type="match status" value="1"/>
</dbReference>
<dbReference type="Gene3D" id="3.30.300.130">
    <property type="entry name" value="Fe-S cluster assembly (FSCA)"/>
    <property type="match status" value="1"/>
</dbReference>
<dbReference type="Gene3D" id="3.40.50.300">
    <property type="entry name" value="P-loop containing nucleotide triphosphate hydrolases"/>
    <property type="match status" value="1"/>
</dbReference>
<dbReference type="HAMAP" id="MF_02040">
    <property type="entry name" value="Mrp_NBP35"/>
    <property type="match status" value="1"/>
</dbReference>
<dbReference type="InterPro" id="IPR034904">
    <property type="entry name" value="FSCA_dom_sf"/>
</dbReference>
<dbReference type="InterPro" id="IPR010376">
    <property type="entry name" value="GBBH-like_N"/>
</dbReference>
<dbReference type="InterPro" id="IPR038492">
    <property type="entry name" value="GBBH-like_N_sf"/>
</dbReference>
<dbReference type="InterPro" id="IPR002744">
    <property type="entry name" value="MIP18-like"/>
</dbReference>
<dbReference type="InterPro" id="IPR000808">
    <property type="entry name" value="Mrp-like_CS"/>
</dbReference>
<dbReference type="InterPro" id="IPR019591">
    <property type="entry name" value="Mrp/NBP35_ATP-bd"/>
</dbReference>
<dbReference type="InterPro" id="IPR044304">
    <property type="entry name" value="NUBPL-like"/>
</dbReference>
<dbReference type="InterPro" id="IPR027417">
    <property type="entry name" value="P-loop_NTPase"/>
</dbReference>
<dbReference type="InterPro" id="IPR033756">
    <property type="entry name" value="YlxH/NBP35"/>
</dbReference>
<dbReference type="PANTHER" id="PTHR42961">
    <property type="entry name" value="IRON-SULFUR PROTEIN NUBPL"/>
    <property type="match status" value="1"/>
</dbReference>
<dbReference type="PANTHER" id="PTHR42961:SF2">
    <property type="entry name" value="IRON-SULFUR PROTEIN NUBPL"/>
    <property type="match status" value="1"/>
</dbReference>
<dbReference type="Pfam" id="PF01883">
    <property type="entry name" value="FeS_assembly_P"/>
    <property type="match status" value="1"/>
</dbReference>
<dbReference type="Pfam" id="PF06155">
    <property type="entry name" value="GBBH-like_N"/>
    <property type="match status" value="1"/>
</dbReference>
<dbReference type="Pfam" id="PF10609">
    <property type="entry name" value="ParA"/>
    <property type="match status" value="1"/>
</dbReference>
<dbReference type="SUPFAM" id="SSF117916">
    <property type="entry name" value="Fe-S cluster assembly (FSCA) domain-like"/>
    <property type="match status" value="1"/>
</dbReference>
<dbReference type="SUPFAM" id="SSF52540">
    <property type="entry name" value="P-loop containing nucleoside triphosphate hydrolases"/>
    <property type="match status" value="1"/>
</dbReference>
<dbReference type="PROSITE" id="PS01215">
    <property type="entry name" value="MRP"/>
    <property type="match status" value="1"/>
</dbReference>
<name>HF101_ARATH</name>
<evidence type="ECO:0000255" key="1"/>
<evidence type="ECO:0000269" key="2">
    <source>
    </source>
</evidence>
<evidence type="ECO:0000269" key="3">
    <source>
    </source>
</evidence>
<evidence type="ECO:0000269" key="4">
    <source>
    </source>
</evidence>
<evidence type="ECO:0000305" key="5"/>
<evidence type="ECO:0007744" key="6">
    <source>
    </source>
</evidence>
<organism>
    <name type="scientific">Arabidopsis thaliana</name>
    <name type="common">Mouse-ear cress</name>
    <dbReference type="NCBI Taxonomy" id="3702"/>
    <lineage>
        <taxon>Eukaryota</taxon>
        <taxon>Viridiplantae</taxon>
        <taxon>Streptophyta</taxon>
        <taxon>Embryophyta</taxon>
        <taxon>Tracheophyta</taxon>
        <taxon>Spermatophyta</taxon>
        <taxon>Magnoliopsida</taxon>
        <taxon>eudicotyledons</taxon>
        <taxon>Gunneridae</taxon>
        <taxon>Pentapetalae</taxon>
        <taxon>rosids</taxon>
        <taxon>malvids</taxon>
        <taxon>Brassicales</taxon>
        <taxon>Brassicaceae</taxon>
        <taxon>Camelineae</taxon>
        <taxon>Arabidopsis</taxon>
    </lineage>
</organism>
<reference key="1">
    <citation type="journal article" date="2004" name="J. Biol. Chem.">
        <title>A novel protein for photosystem I biogenesis.</title>
        <authorList>
            <person name="Stockel J."/>
            <person name="Oelmuller R."/>
        </authorList>
    </citation>
    <scope>NUCLEOTIDE SEQUENCE [MRNA]</scope>
    <scope>FUNCTION</scope>
    <scope>SUBCELLULAR LOCATION</scope>
    <scope>TISSUE SPECIFICITY</scope>
    <scope>DISRUPTION PHENOTYPE</scope>
    <source>
        <strain>cv. Columbia</strain>
    </source>
</reference>
<reference key="2">
    <citation type="journal article" date="2004" name="Plant J.">
        <title>The universally conserved HCF101 protein is involved in assembly of [4Fe-4S]-cluster-containing complexes in Arabidopsis thaliana chloroplasts.</title>
        <authorList>
            <person name="Lezhneva L."/>
            <person name="Amann K."/>
            <person name="Meurer J."/>
        </authorList>
    </citation>
    <scope>NUCLEOTIDE SEQUENCE [MRNA]</scope>
    <scope>FUNCTION</scope>
    <scope>SUBCELLULAR LOCATION</scope>
    <scope>TISSUE SPECIFICITY</scope>
    <scope>DISRUPTION PHENOTYPE</scope>
</reference>
<reference key="3">
    <citation type="journal article" date="2000" name="DNA Res.">
        <title>Structural analysis of Arabidopsis thaliana chromosome 3. II. Sequence features of the 4,251,695 bp regions covered by 90 P1, TAC and BAC clones.</title>
        <authorList>
            <person name="Kaneko T."/>
            <person name="Katoh T."/>
            <person name="Sato S."/>
            <person name="Nakamura Y."/>
            <person name="Asamizu E."/>
            <person name="Tabata S."/>
        </authorList>
    </citation>
    <scope>NUCLEOTIDE SEQUENCE [LARGE SCALE GENOMIC DNA]</scope>
    <source>
        <strain>cv. Columbia</strain>
    </source>
</reference>
<reference key="4">
    <citation type="journal article" date="2017" name="Plant J.">
        <title>Araport11: a complete reannotation of the Arabidopsis thaliana reference genome.</title>
        <authorList>
            <person name="Cheng C.Y."/>
            <person name="Krishnakumar V."/>
            <person name="Chan A.P."/>
            <person name="Thibaud-Nissen F."/>
            <person name="Schobel S."/>
            <person name="Town C.D."/>
        </authorList>
    </citation>
    <scope>GENOME REANNOTATION</scope>
    <source>
        <strain>cv. Columbia</strain>
    </source>
</reference>
<reference key="5">
    <citation type="submission" date="2006-07" db="EMBL/GenBank/DDBJ databases">
        <title>Large-scale analysis of RIKEN Arabidopsis full-length (RAFL) cDNAs.</title>
        <authorList>
            <person name="Totoki Y."/>
            <person name="Seki M."/>
            <person name="Ishida J."/>
            <person name="Nakajima M."/>
            <person name="Enju A."/>
            <person name="Kamiya A."/>
            <person name="Narusaka M."/>
            <person name="Shin-i T."/>
            <person name="Nakagawa M."/>
            <person name="Sakamoto N."/>
            <person name="Oishi K."/>
            <person name="Kohara Y."/>
            <person name="Kobayashi M."/>
            <person name="Toyoda A."/>
            <person name="Sakaki Y."/>
            <person name="Sakurai T."/>
            <person name="Iida K."/>
            <person name="Akiyama K."/>
            <person name="Satou M."/>
            <person name="Toyoda T."/>
            <person name="Konagaya A."/>
            <person name="Carninci P."/>
            <person name="Kawai J."/>
            <person name="Hayashizaki Y."/>
            <person name="Shinozaki K."/>
        </authorList>
    </citation>
    <scope>NUCLEOTIDE SEQUENCE [LARGE SCALE MRNA]</scope>
    <source>
        <strain>cv. Columbia</strain>
    </source>
</reference>
<reference key="6">
    <citation type="submission" date="2002-03" db="EMBL/GenBank/DDBJ databases">
        <title>Full-length cDNA from Arabidopsis thaliana.</title>
        <authorList>
            <person name="Brover V.V."/>
            <person name="Troukhan M.E."/>
            <person name="Alexandrov N.A."/>
            <person name="Lu Y.-P."/>
            <person name="Flavell R.B."/>
            <person name="Feldmann K.A."/>
        </authorList>
    </citation>
    <scope>NUCLEOTIDE SEQUENCE [LARGE SCALE MRNA]</scope>
</reference>
<reference key="7">
    <citation type="journal article" date="2010" name="Biochem. J.">
        <title>Chloroplast HCF101 is a scaffold protein for [4Fe-4S] cluster assembly.</title>
        <authorList>
            <person name="Schwenkert S."/>
            <person name="Netz D.J."/>
            <person name="Frazzon J."/>
            <person name="Pierik A.J."/>
            <person name="Bill E."/>
            <person name="Gross J."/>
            <person name="Lill R."/>
            <person name="Meurer J."/>
        </authorList>
    </citation>
    <scope>FUNCTION</scope>
    <scope>COFACTOR</scope>
    <scope>MUTAGENESIS OF CYS-128; CYS-347 AND CYS-419</scope>
</reference>
<reference key="8">
    <citation type="journal article" date="2012" name="Mol. Cell. Proteomics">
        <title>Comparative large-scale characterisation of plant vs. mammal proteins reveals similar and idiosyncratic N-alpha acetylation features.</title>
        <authorList>
            <person name="Bienvenut W.V."/>
            <person name="Sumpton D."/>
            <person name="Martinez A."/>
            <person name="Lilla S."/>
            <person name="Espagne C."/>
            <person name="Meinnel T."/>
            <person name="Giglione C."/>
        </authorList>
    </citation>
    <scope>ACETYLATION [LARGE SCALE ANALYSIS] AT ALA-62</scope>
    <scope>CLEAVAGE OF TRANSIT PEPTIDE [LARGE SCALE ANALYSIS] AFTER LYS-61</scope>
    <scope>IDENTIFICATION BY MASS SPECTROMETRY [LARGE SCALE ANALYSIS]</scope>
</reference>
<feature type="transit peptide" description="Chloroplast" evidence="6">
    <location>
        <begin position="1"/>
        <end position="61"/>
    </location>
</feature>
<feature type="chain" id="PRO_0000430161" description="Fe-S cluster assembly factor HCF101, chloroplastic">
    <location>
        <begin position="62"/>
        <end position="532"/>
    </location>
</feature>
<feature type="binding site" evidence="1">
    <location>
        <begin position="184"/>
        <end position="191"/>
    </location>
    <ligand>
        <name>ATP</name>
        <dbReference type="ChEBI" id="CHEBI:30616"/>
    </ligand>
</feature>
<feature type="modified residue" description="N-acetylalanine" evidence="6">
    <location>
        <position position="62"/>
    </location>
</feature>
<feature type="mutagenesis site" description="Loss of iron-sulfur (Fe-S) binding." evidence="4">
    <original>C</original>
    <variation>S</variation>
    <location>
        <position position="128"/>
    </location>
</feature>
<feature type="mutagenesis site" description="Loss of iron-sulfur (Fe-S) binding." evidence="4">
    <original>C</original>
    <variation>S</variation>
    <location>
        <position position="347"/>
    </location>
</feature>
<feature type="mutagenesis site" description="Loss of iron-sulfur (Fe-S) binding." evidence="4">
    <original>C</original>
    <variation>S</variation>
    <location>
        <position position="419"/>
    </location>
</feature>
<feature type="sequence conflict" description="In Ref. 1; CAD90253 and 6; AAM64337." evidence="5" ref="1 6">
    <original>V</original>
    <variation>L</variation>
    <location>
        <position position="153"/>
    </location>
</feature>
<gene>
    <name type="primary">HCF101</name>
    <name type="ordered locus">At3g24430</name>
    <name type="ORF">K7M2.22</name>
</gene>
<comment type="function">
    <text evidence="2 3 4">Required for photosystem I (PSI) biosynthesis and assembly. May serve as a chloroplast scaffold protein that specifically assembles iron-sulfur (4Fe-4S) clusters and transfers them to the chloroplast PSI and ferredoxin-thioredoxin (FTR) complexes. Can assemble a 4Fe-4S cluster and transfer it to apoproteins in yeast cells. Probably not required for assembly or stability of plastidic 2Fe-2S clusters.</text>
</comment>
<comment type="cofactor">
    <cofactor evidence="4">
        <name>[4Fe-4S] cluster</name>
        <dbReference type="ChEBI" id="CHEBI:49883"/>
    </cofactor>
    <text evidence="4">Binds 1 [4Fe-4S] cluster.</text>
</comment>
<comment type="subcellular location">
    <subcellularLocation>
        <location evidence="2 3">Plastid</location>
        <location evidence="2 3">Chloroplast stroma</location>
    </subcellularLocation>
</comment>
<comment type="tissue specificity">
    <text evidence="2 3">Expressed in aerial tissues exposed to light. Very low expression in roots.</text>
</comment>
<comment type="disruption phenotype">
    <text evidence="2 3">Seedling lethality when homozygous due to impaired photosystem I (PSI).</text>
</comment>
<comment type="similarity">
    <text evidence="5">Belongs to the Mrp/NBP35 ATP-binding proteins family.</text>
</comment>
<comment type="sequence caution" evidence="5">
    <conflict type="erroneous gene model prediction">
        <sequence resource="EMBL-CDS" id="BAB02944"/>
    </conflict>
</comment>
<protein>
    <recommendedName>
        <fullName>Fe-S cluster assembly factor HCF101, chloroplastic</fullName>
    </recommendedName>
    <alternativeName>
        <fullName>Protein HIGH CHLOROPHYLL FLUORESCENCE 101</fullName>
    </alternativeName>
</protein>
<accession>Q6STH5</accession>
<accession>Q8LD16</accession>
<accession>Q9LK00</accession>
<keyword id="KW-0007">Acetylation</keyword>
<keyword id="KW-0067">ATP-binding</keyword>
<keyword id="KW-0150">Chloroplast</keyword>
<keyword id="KW-0408">Iron</keyword>
<keyword id="KW-0411">Iron-sulfur</keyword>
<keyword id="KW-0479">Metal-binding</keyword>
<keyword id="KW-0547">Nucleotide-binding</keyword>
<keyword id="KW-0934">Plastid</keyword>
<keyword id="KW-1185">Reference proteome</keyword>
<keyword id="KW-0809">Transit peptide</keyword>
<proteinExistence type="evidence at protein level"/>